<feature type="chain" id="PRO_0000113868" description="Protein GrpE 2">
    <location>
        <begin position="1"/>
        <end position="203"/>
    </location>
</feature>
<feature type="region of interest" description="Disordered" evidence="2">
    <location>
        <begin position="1"/>
        <end position="64"/>
    </location>
</feature>
<feature type="compositionally biased region" description="Basic and acidic residues" evidence="2">
    <location>
        <begin position="1"/>
        <end position="12"/>
    </location>
</feature>
<feature type="compositionally biased region" description="Low complexity" evidence="2">
    <location>
        <begin position="45"/>
        <end position="56"/>
    </location>
</feature>
<comment type="function">
    <text evidence="1">Participates actively in the response to hyperosmotic and heat shock by preventing the aggregation of stress-denatured proteins, in association with DnaK and GrpE. It is the nucleotide exchange factor for DnaK and may function as a thermosensor. Unfolded proteins bind initially to DnaJ; upon interaction with the DnaJ-bound protein, DnaK hydrolyzes its bound ATP, resulting in the formation of a stable complex. GrpE releases ADP from DnaK; ATP binding to DnaK triggers the release of the substrate protein, thus completing the reaction cycle. Several rounds of ATP-dependent interactions between DnaJ, DnaK and GrpE are required for fully efficient folding.</text>
</comment>
<comment type="subunit">
    <text evidence="1">Homodimer.</text>
</comment>
<comment type="subcellular location">
    <subcellularLocation>
        <location evidence="1">Cytoplasm</location>
    </subcellularLocation>
</comment>
<comment type="similarity">
    <text evidence="1">Belongs to the GrpE family.</text>
</comment>
<sequence>MPTRPQEPDRAASDPVEPVPEGAGRPPRGDLPQPGPPARPEATNGEPGPDAAGPAPAEDEYTTAIQELEDRWRRTLADLDNLRKRHARELERERAVERSRTAAAFLPVLDNLELALTHAGADPGAIVEGIRAVRDQAVNVLELLGYPRHAETGVAFDPARHEVVGVVQDPDAPPGTVVEVLRPGYGDGERQLRPAAVTVTKRE</sequence>
<keyword id="KW-0143">Chaperone</keyword>
<keyword id="KW-0963">Cytoplasm</keyword>
<keyword id="KW-1185">Reference proteome</keyword>
<keyword id="KW-0346">Stress response</keyword>
<dbReference type="EMBL" id="BA000030">
    <property type="protein sequence ID" value="BAC74949.1"/>
    <property type="molecule type" value="Genomic_DNA"/>
</dbReference>
<dbReference type="RefSeq" id="WP_010988633.1">
    <property type="nucleotide sequence ID" value="NZ_JZJK01000085.1"/>
</dbReference>
<dbReference type="SMR" id="Q826F5"/>
<dbReference type="GeneID" id="41544310"/>
<dbReference type="KEGG" id="sma:SAVERM_7238"/>
<dbReference type="eggNOG" id="COG0576">
    <property type="taxonomic scope" value="Bacteria"/>
</dbReference>
<dbReference type="HOGENOM" id="CLU_057217_6_3_11"/>
<dbReference type="OrthoDB" id="5191115at2"/>
<dbReference type="Proteomes" id="UP000000428">
    <property type="component" value="Chromosome"/>
</dbReference>
<dbReference type="GO" id="GO:0005737">
    <property type="term" value="C:cytoplasm"/>
    <property type="evidence" value="ECO:0007669"/>
    <property type="project" value="UniProtKB-SubCell"/>
</dbReference>
<dbReference type="GO" id="GO:0000774">
    <property type="term" value="F:adenyl-nucleotide exchange factor activity"/>
    <property type="evidence" value="ECO:0007669"/>
    <property type="project" value="InterPro"/>
</dbReference>
<dbReference type="GO" id="GO:0042803">
    <property type="term" value="F:protein homodimerization activity"/>
    <property type="evidence" value="ECO:0007669"/>
    <property type="project" value="InterPro"/>
</dbReference>
<dbReference type="GO" id="GO:0051087">
    <property type="term" value="F:protein-folding chaperone binding"/>
    <property type="evidence" value="ECO:0007669"/>
    <property type="project" value="InterPro"/>
</dbReference>
<dbReference type="GO" id="GO:0051082">
    <property type="term" value="F:unfolded protein binding"/>
    <property type="evidence" value="ECO:0007669"/>
    <property type="project" value="TreeGrafter"/>
</dbReference>
<dbReference type="GO" id="GO:0006457">
    <property type="term" value="P:protein folding"/>
    <property type="evidence" value="ECO:0007669"/>
    <property type="project" value="InterPro"/>
</dbReference>
<dbReference type="CDD" id="cd00446">
    <property type="entry name" value="GrpE"/>
    <property type="match status" value="1"/>
</dbReference>
<dbReference type="Gene3D" id="3.90.20.20">
    <property type="match status" value="1"/>
</dbReference>
<dbReference type="Gene3D" id="2.30.22.10">
    <property type="entry name" value="Head domain of nucleotide exchange factor GrpE"/>
    <property type="match status" value="1"/>
</dbReference>
<dbReference type="HAMAP" id="MF_01151">
    <property type="entry name" value="GrpE"/>
    <property type="match status" value="1"/>
</dbReference>
<dbReference type="InterPro" id="IPR000740">
    <property type="entry name" value="GrpE"/>
</dbReference>
<dbReference type="InterPro" id="IPR013805">
    <property type="entry name" value="GrpE_coiled_coil"/>
</dbReference>
<dbReference type="InterPro" id="IPR009012">
    <property type="entry name" value="GrpE_head"/>
</dbReference>
<dbReference type="PANTHER" id="PTHR21237">
    <property type="entry name" value="GRPE PROTEIN"/>
    <property type="match status" value="1"/>
</dbReference>
<dbReference type="PANTHER" id="PTHR21237:SF23">
    <property type="entry name" value="GRPE PROTEIN HOMOLOG, MITOCHONDRIAL"/>
    <property type="match status" value="1"/>
</dbReference>
<dbReference type="Pfam" id="PF01025">
    <property type="entry name" value="GrpE"/>
    <property type="match status" value="1"/>
</dbReference>
<dbReference type="PRINTS" id="PR00773">
    <property type="entry name" value="GRPEPROTEIN"/>
</dbReference>
<dbReference type="SUPFAM" id="SSF58014">
    <property type="entry name" value="Coiled-coil domain of nucleotide exchange factor GrpE"/>
    <property type="match status" value="1"/>
</dbReference>
<dbReference type="SUPFAM" id="SSF51064">
    <property type="entry name" value="Head domain of nucleotide exchange factor GrpE"/>
    <property type="match status" value="1"/>
</dbReference>
<dbReference type="PROSITE" id="PS01071">
    <property type="entry name" value="GRPE"/>
    <property type="match status" value="1"/>
</dbReference>
<reference key="1">
    <citation type="journal article" date="2001" name="Proc. Natl. Acad. Sci. U.S.A.">
        <title>Genome sequence of an industrial microorganism Streptomyces avermitilis: deducing the ability of producing secondary metabolites.</title>
        <authorList>
            <person name="Omura S."/>
            <person name="Ikeda H."/>
            <person name="Ishikawa J."/>
            <person name="Hanamoto A."/>
            <person name="Takahashi C."/>
            <person name="Shinose M."/>
            <person name="Takahashi Y."/>
            <person name="Horikawa H."/>
            <person name="Nakazawa H."/>
            <person name="Osonoe T."/>
            <person name="Kikuchi H."/>
            <person name="Shiba T."/>
            <person name="Sakaki Y."/>
            <person name="Hattori M."/>
        </authorList>
    </citation>
    <scope>NUCLEOTIDE SEQUENCE [LARGE SCALE GENOMIC DNA]</scope>
    <source>
        <strain>ATCC 31267 / DSM 46492 / JCM 5070 / NBRC 14893 / NCIMB 12804 / NRRL 8165 / MA-4680</strain>
    </source>
</reference>
<reference key="2">
    <citation type="journal article" date="2003" name="Nat. Biotechnol.">
        <title>Complete genome sequence and comparative analysis of the industrial microorganism Streptomyces avermitilis.</title>
        <authorList>
            <person name="Ikeda H."/>
            <person name="Ishikawa J."/>
            <person name="Hanamoto A."/>
            <person name="Shinose M."/>
            <person name="Kikuchi H."/>
            <person name="Shiba T."/>
            <person name="Sakaki Y."/>
            <person name="Hattori M."/>
            <person name="Omura S."/>
        </authorList>
    </citation>
    <scope>NUCLEOTIDE SEQUENCE [LARGE SCALE GENOMIC DNA]</scope>
    <source>
        <strain>ATCC 31267 / DSM 46492 / JCM 5070 / NBRC 14893 / NCIMB 12804 / NRRL 8165 / MA-4680</strain>
    </source>
</reference>
<proteinExistence type="inferred from homology"/>
<gene>
    <name evidence="1" type="primary">grpE2</name>
    <name type="ordered locus">SAV_7238</name>
</gene>
<accession>Q826F5</accession>
<name>GRPE2_STRAW</name>
<organism>
    <name type="scientific">Streptomyces avermitilis (strain ATCC 31267 / DSM 46492 / JCM 5070 / NBRC 14893 / NCIMB 12804 / NRRL 8165 / MA-4680)</name>
    <dbReference type="NCBI Taxonomy" id="227882"/>
    <lineage>
        <taxon>Bacteria</taxon>
        <taxon>Bacillati</taxon>
        <taxon>Actinomycetota</taxon>
        <taxon>Actinomycetes</taxon>
        <taxon>Kitasatosporales</taxon>
        <taxon>Streptomycetaceae</taxon>
        <taxon>Streptomyces</taxon>
    </lineage>
</organism>
<evidence type="ECO:0000255" key="1">
    <source>
        <dbReference type="HAMAP-Rule" id="MF_01151"/>
    </source>
</evidence>
<evidence type="ECO:0000256" key="2">
    <source>
        <dbReference type="SAM" id="MobiDB-lite"/>
    </source>
</evidence>
<protein>
    <recommendedName>
        <fullName evidence="1">Protein GrpE 2</fullName>
    </recommendedName>
    <alternativeName>
        <fullName evidence="1">HSP-70 cofactor 2</fullName>
    </alternativeName>
</protein>